<accession>Q0QFQ1</accession>
<proteinExistence type="evidence at transcript level"/>
<evidence type="ECO:0000250" key="1"/>
<evidence type="ECO:0000256" key="2">
    <source>
        <dbReference type="SAM" id="MobiDB-lite"/>
    </source>
</evidence>
<evidence type="ECO:0000269" key="3">
    <source>
    </source>
</evidence>
<evidence type="ECO:0000305" key="4"/>
<sequence>MRSTNTRSARSRPTKRSVNASATPTQSFHRVDAHLSLLEGAEETGWVEFKTNTRVERIEQDADSVTVYDQNGNAYRGVALIGADGVRSVVRQTYVNDQPRVTGHVVYRAVVDKDEFPQDLRWNASSLWVGPKCHLVHYPLRGGEQYNIVVTFQSRQQEEWGVTEGSKEEVESYFQDICPKARQLIGLPKSWKRWATADREPIPQWTFGRTTLLGDAAHPTTQYMAQGACMALEDAVTLGEALRVHGNDWGKALDLYQRSRITRTARIVLSGREMGRLYHAQGVERLVRNSLWKGRTTEQFYDAIQWLYGWNVDNCLSESI</sequence>
<protein>
    <recommendedName>
        <fullName>3-hydroxybenzoate 6-hydroxylase 2</fullName>
        <ecNumber>1.14.13.24</ecNumber>
    </recommendedName>
    <alternativeName>
        <fullName>Inducible 3-hydroxybenzoate 6-hydroxylase</fullName>
    </alternativeName>
</protein>
<gene>
    <name type="primary">hbzD</name>
</gene>
<dbReference type="EC" id="1.14.13.24"/>
<dbReference type="EMBL" id="DQ394580">
    <property type="protein sequence ID" value="ABD64514.1"/>
    <property type="molecule type" value="Genomic_DNA"/>
</dbReference>
<dbReference type="SMR" id="Q0QFQ1"/>
<dbReference type="GO" id="GO:0018669">
    <property type="term" value="F:3-hydroxybenzoate 6-monooxygenase activity"/>
    <property type="evidence" value="ECO:0007669"/>
    <property type="project" value="UniProtKB-EC"/>
</dbReference>
<dbReference type="GO" id="GO:0071949">
    <property type="term" value="F:FAD binding"/>
    <property type="evidence" value="ECO:0007669"/>
    <property type="project" value="InterPro"/>
</dbReference>
<dbReference type="GO" id="GO:0009056">
    <property type="term" value="P:catabolic process"/>
    <property type="evidence" value="ECO:0007669"/>
    <property type="project" value="UniProtKB-KW"/>
</dbReference>
<dbReference type="Gene3D" id="3.50.50.60">
    <property type="entry name" value="FAD/NAD(P)-binding domain"/>
    <property type="match status" value="1"/>
</dbReference>
<dbReference type="InterPro" id="IPR002938">
    <property type="entry name" value="FAD-bd"/>
</dbReference>
<dbReference type="InterPro" id="IPR050493">
    <property type="entry name" value="FAD-dep_Monooxygenase_BioMet"/>
</dbReference>
<dbReference type="InterPro" id="IPR036188">
    <property type="entry name" value="FAD/NAD-bd_sf"/>
</dbReference>
<dbReference type="NCBIfam" id="NF006021">
    <property type="entry name" value="PRK08163.1"/>
    <property type="match status" value="1"/>
</dbReference>
<dbReference type="PANTHER" id="PTHR13789:SF318">
    <property type="entry name" value="GERANYLGERANYL DIPHOSPHATE REDUCTASE"/>
    <property type="match status" value="1"/>
</dbReference>
<dbReference type="PANTHER" id="PTHR13789">
    <property type="entry name" value="MONOOXYGENASE"/>
    <property type="match status" value="1"/>
</dbReference>
<dbReference type="Pfam" id="PF01494">
    <property type="entry name" value="FAD_binding_3"/>
    <property type="match status" value="1"/>
</dbReference>
<dbReference type="PRINTS" id="PR00420">
    <property type="entry name" value="RNGMNOXGNASE"/>
</dbReference>
<dbReference type="SUPFAM" id="SSF54373">
    <property type="entry name" value="FAD-linked reductases, C-terminal domain"/>
    <property type="match status" value="1"/>
</dbReference>
<dbReference type="SUPFAM" id="SSF51905">
    <property type="entry name" value="FAD/NAD(P)-binding domain"/>
    <property type="match status" value="1"/>
</dbReference>
<name>3HBH2_AQUAC</name>
<reference key="1">
    <citation type="journal article" date="2007" name="Res. Microbiol.">
        <title>Characterization of hbzE-encoded gentisate 1,2-dioxygenase from Pseudomonas alcaligenes NCIMB 9867.</title>
        <authorList>
            <person name="Yeo C.C."/>
            <person name="Tan C.L."/>
            <person name="Gao X."/>
            <person name="Zhao B."/>
            <person name="Poh C.L."/>
        </authorList>
    </citation>
    <scope>NUCLEOTIDE SEQUENCE [GENOMIC DNA]</scope>
    <source>
        <strain>NCIMB 9867 / P25X</strain>
    </source>
</reference>
<reference key="2">
    <citation type="journal article" date="2005" name="J. Bacteriol.">
        <title>Molecular and biochemical characterization of the xlnD-encoded 3-hydroxybenzoate 6-hydroxylase involved in the degradation of 2,5-xylenol via the gentisate pathway in Pseudomonas alcaligenes NCIMB 9867.</title>
        <authorList>
            <person name="Gao X."/>
            <person name="Tan C.L."/>
            <person name="Yeo C.C."/>
            <person name="Poh C.L."/>
        </authorList>
    </citation>
    <scope>INDUCTION</scope>
    <source>
        <strain>NCIMB 9867 / P25X</strain>
    </source>
</reference>
<keyword id="KW-0058">Aromatic hydrocarbons catabolism</keyword>
<keyword id="KW-0274">FAD</keyword>
<keyword id="KW-0285">Flavoprotein</keyword>
<keyword id="KW-0503">Monooxygenase</keyword>
<keyword id="KW-0520">NAD</keyword>
<keyword id="KW-0560">Oxidoreductase</keyword>
<feature type="chain" id="PRO_0000382701" description="3-hydroxybenzoate 6-hydroxylase 2">
    <location>
        <begin position="1"/>
        <end position="320"/>
    </location>
</feature>
<feature type="region of interest" description="Disordered" evidence="2">
    <location>
        <begin position="1"/>
        <end position="25"/>
    </location>
</feature>
<feature type="compositionally biased region" description="Polar residues" evidence="2">
    <location>
        <begin position="16"/>
        <end position="25"/>
    </location>
</feature>
<organism>
    <name type="scientific">Aquipseudomonas alcaligenes</name>
    <name type="common">Pseudomonas alcaligenes</name>
    <dbReference type="NCBI Taxonomy" id="43263"/>
    <lineage>
        <taxon>Bacteria</taxon>
        <taxon>Pseudomonadati</taxon>
        <taxon>Pseudomonadota</taxon>
        <taxon>Gammaproteobacteria</taxon>
        <taxon>Pseudomonadales</taxon>
        <taxon>Pseudomonadaceae</taxon>
        <taxon>Aquipseudomonas</taxon>
    </lineage>
</organism>
<comment type="function">
    <text evidence="1">Catalyzes the conversion of 3-hydroxybenzoate to gentisate.</text>
</comment>
<comment type="catalytic activity">
    <reaction>
        <text>3-hydroxybenzoate + NADH + O2 + H(+) = 2,5-dihydroxybenzoate + NAD(+) + H2O</text>
        <dbReference type="Rhea" id="RHEA:22692"/>
        <dbReference type="ChEBI" id="CHEBI:15377"/>
        <dbReference type="ChEBI" id="CHEBI:15378"/>
        <dbReference type="ChEBI" id="CHEBI:15379"/>
        <dbReference type="ChEBI" id="CHEBI:16193"/>
        <dbReference type="ChEBI" id="CHEBI:57540"/>
        <dbReference type="ChEBI" id="CHEBI:57945"/>
        <dbReference type="ChEBI" id="CHEBI:58044"/>
        <dbReference type="EC" id="1.14.13.24"/>
    </reaction>
</comment>
<comment type="cofactor">
    <cofactor evidence="1">
        <name>FAD</name>
        <dbReference type="ChEBI" id="CHEBI:57692"/>
    </cofactor>
</comment>
<comment type="induction">
    <text evidence="3">By 3-hydroxybenzoate.</text>
</comment>
<comment type="similarity">
    <text evidence="4">Belongs to the 3-hydroxybenzoate 6-hydroxylase family.</text>
</comment>